<feature type="chain" id="PRO_1000193907" description="Large ribosomal subunit protein bL19">
    <location>
        <begin position="1"/>
        <end position="114"/>
    </location>
</feature>
<evidence type="ECO:0000255" key="1">
    <source>
        <dbReference type="HAMAP-Rule" id="MF_00402"/>
    </source>
</evidence>
<evidence type="ECO:0000305" key="2"/>
<gene>
    <name evidence="1" type="primary">rplS</name>
    <name type="ordered locus">Teth514_1708</name>
</gene>
<organism>
    <name type="scientific">Thermoanaerobacter sp. (strain X514)</name>
    <dbReference type="NCBI Taxonomy" id="399726"/>
    <lineage>
        <taxon>Bacteria</taxon>
        <taxon>Bacillati</taxon>
        <taxon>Bacillota</taxon>
        <taxon>Clostridia</taxon>
        <taxon>Thermoanaerobacterales</taxon>
        <taxon>Thermoanaerobacteraceae</taxon>
        <taxon>Thermoanaerobacter</taxon>
    </lineage>
</organism>
<name>RL19_THEPX</name>
<dbReference type="EMBL" id="CP000923">
    <property type="protein sequence ID" value="ABY92994.1"/>
    <property type="molecule type" value="Genomic_DNA"/>
</dbReference>
<dbReference type="RefSeq" id="WP_003866683.1">
    <property type="nucleotide sequence ID" value="NC_010320.1"/>
</dbReference>
<dbReference type="SMR" id="B0K1U6"/>
<dbReference type="KEGG" id="tex:Teth514_1708"/>
<dbReference type="HOGENOM" id="CLU_103507_2_1_9"/>
<dbReference type="Proteomes" id="UP000002155">
    <property type="component" value="Chromosome"/>
</dbReference>
<dbReference type="GO" id="GO:0022625">
    <property type="term" value="C:cytosolic large ribosomal subunit"/>
    <property type="evidence" value="ECO:0007669"/>
    <property type="project" value="TreeGrafter"/>
</dbReference>
<dbReference type="GO" id="GO:0003735">
    <property type="term" value="F:structural constituent of ribosome"/>
    <property type="evidence" value="ECO:0007669"/>
    <property type="project" value="InterPro"/>
</dbReference>
<dbReference type="GO" id="GO:0006412">
    <property type="term" value="P:translation"/>
    <property type="evidence" value="ECO:0007669"/>
    <property type="project" value="UniProtKB-UniRule"/>
</dbReference>
<dbReference type="FunFam" id="2.30.30.790:FF:000001">
    <property type="entry name" value="50S ribosomal protein L19"/>
    <property type="match status" value="1"/>
</dbReference>
<dbReference type="Gene3D" id="2.30.30.790">
    <property type="match status" value="1"/>
</dbReference>
<dbReference type="HAMAP" id="MF_00402">
    <property type="entry name" value="Ribosomal_bL19"/>
    <property type="match status" value="1"/>
</dbReference>
<dbReference type="InterPro" id="IPR001857">
    <property type="entry name" value="Ribosomal_bL19"/>
</dbReference>
<dbReference type="InterPro" id="IPR018257">
    <property type="entry name" value="Ribosomal_bL19_CS"/>
</dbReference>
<dbReference type="InterPro" id="IPR038657">
    <property type="entry name" value="Ribosomal_bL19_sf"/>
</dbReference>
<dbReference type="InterPro" id="IPR008991">
    <property type="entry name" value="Translation_prot_SH3-like_sf"/>
</dbReference>
<dbReference type="NCBIfam" id="TIGR01024">
    <property type="entry name" value="rplS_bact"/>
    <property type="match status" value="1"/>
</dbReference>
<dbReference type="PANTHER" id="PTHR15680:SF9">
    <property type="entry name" value="LARGE RIBOSOMAL SUBUNIT PROTEIN BL19M"/>
    <property type="match status" value="1"/>
</dbReference>
<dbReference type="PANTHER" id="PTHR15680">
    <property type="entry name" value="RIBOSOMAL PROTEIN L19"/>
    <property type="match status" value="1"/>
</dbReference>
<dbReference type="Pfam" id="PF01245">
    <property type="entry name" value="Ribosomal_L19"/>
    <property type="match status" value="1"/>
</dbReference>
<dbReference type="PIRSF" id="PIRSF002191">
    <property type="entry name" value="Ribosomal_L19"/>
    <property type="match status" value="1"/>
</dbReference>
<dbReference type="PRINTS" id="PR00061">
    <property type="entry name" value="RIBOSOMALL19"/>
</dbReference>
<dbReference type="SUPFAM" id="SSF50104">
    <property type="entry name" value="Translation proteins SH3-like domain"/>
    <property type="match status" value="1"/>
</dbReference>
<dbReference type="PROSITE" id="PS01015">
    <property type="entry name" value="RIBOSOMAL_L19"/>
    <property type="match status" value="1"/>
</dbReference>
<protein>
    <recommendedName>
        <fullName evidence="1">Large ribosomal subunit protein bL19</fullName>
    </recommendedName>
    <alternativeName>
        <fullName evidence="2">50S ribosomal protein L19</fullName>
    </alternativeName>
</protein>
<keyword id="KW-0687">Ribonucleoprotein</keyword>
<keyword id="KW-0689">Ribosomal protein</keyword>
<comment type="function">
    <text evidence="1">This protein is located at the 30S-50S ribosomal subunit interface and may play a role in the structure and function of the aminoacyl-tRNA binding site.</text>
</comment>
<comment type="similarity">
    <text evidence="1">Belongs to the bacterial ribosomal protein bL19 family.</text>
</comment>
<proteinExistence type="inferred from homology"/>
<accession>B0K1U6</accession>
<reference key="1">
    <citation type="submission" date="2008-01" db="EMBL/GenBank/DDBJ databases">
        <title>Complete sequence of Thermoanaerobacter sp. X514.</title>
        <authorList>
            <consortium name="US DOE Joint Genome Institute"/>
            <person name="Copeland A."/>
            <person name="Lucas S."/>
            <person name="Lapidus A."/>
            <person name="Barry K."/>
            <person name="Glavina del Rio T."/>
            <person name="Dalin E."/>
            <person name="Tice H."/>
            <person name="Pitluck S."/>
            <person name="Bruce D."/>
            <person name="Goodwin L."/>
            <person name="Saunders E."/>
            <person name="Brettin T."/>
            <person name="Detter J.C."/>
            <person name="Han C."/>
            <person name="Schmutz J."/>
            <person name="Larimer F."/>
            <person name="Land M."/>
            <person name="Hauser L."/>
            <person name="Kyrpides N."/>
            <person name="Kim E."/>
            <person name="Hemme C."/>
            <person name="Fields M.W."/>
            <person name="He Z."/>
            <person name="Zhou J."/>
            <person name="Richardson P."/>
        </authorList>
    </citation>
    <scope>NUCLEOTIDE SEQUENCE [LARGE SCALE GENOMIC DNA]</scope>
    <source>
        <strain>X514</strain>
    </source>
</reference>
<sequence>MDLIKAVESQQMRKDLTPFNVGDTIRVHYKVIEGDRERIQPFEGIVIKKSGSGLRETFTVRRVSYGVGVERTFPLHSPRIEKIEVIRRGKVRRAKLYYLRKRVGKAATKIKELM</sequence>